<evidence type="ECO:0000255" key="1">
    <source>
        <dbReference type="HAMAP-Rule" id="MF_01701"/>
    </source>
</evidence>
<reference key="1">
    <citation type="journal article" date="2002" name="Environ. Microbiol.">
        <title>Complete genome sequence and comparative analysis of the metabolically versatile Pseudomonas putida KT2440.</title>
        <authorList>
            <person name="Nelson K.E."/>
            <person name="Weinel C."/>
            <person name="Paulsen I.T."/>
            <person name="Dodson R.J."/>
            <person name="Hilbert H."/>
            <person name="Martins dos Santos V.A.P."/>
            <person name="Fouts D.E."/>
            <person name="Gill S.R."/>
            <person name="Pop M."/>
            <person name="Holmes M."/>
            <person name="Brinkac L.M."/>
            <person name="Beanan M.J."/>
            <person name="DeBoy R.T."/>
            <person name="Daugherty S.C."/>
            <person name="Kolonay J.F."/>
            <person name="Madupu R."/>
            <person name="Nelson W.C."/>
            <person name="White O."/>
            <person name="Peterson J.D."/>
            <person name="Khouri H.M."/>
            <person name="Hance I."/>
            <person name="Chris Lee P."/>
            <person name="Holtzapple E.K."/>
            <person name="Scanlan D."/>
            <person name="Tran K."/>
            <person name="Moazzez A."/>
            <person name="Utterback T.R."/>
            <person name="Rizzo M."/>
            <person name="Lee K."/>
            <person name="Kosack D."/>
            <person name="Moestl D."/>
            <person name="Wedler H."/>
            <person name="Lauber J."/>
            <person name="Stjepandic D."/>
            <person name="Hoheisel J."/>
            <person name="Straetz M."/>
            <person name="Heim S."/>
            <person name="Kiewitz C."/>
            <person name="Eisen J.A."/>
            <person name="Timmis K.N."/>
            <person name="Duesterhoeft A."/>
            <person name="Tuemmler B."/>
            <person name="Fraser C.M."/>
        </authorList>
    </citation>
    <scope>NUCLEOTIDE SEQUENCE [LARGE SCALE GENOMIC DNA]</scope>
    <source>
        <strain>ATCC 47054 / DSM 6125 / CFBP 8728 / NCIMB 11950 / KT2440</strain>
    </source>
</reference>
<proteinExistence type="inferred from homology"/>
<feature type="chain" id="PRO_0000092283" description="Sulfate/thiosulfate import ATP-binding protein CysA">
    <location>
        <begin position="1"/>
        <end position="329"/>
    </location>
</feature>
<feature type="domain" description="ABC transporter" evidence="1">
    <location>
        <begin position="3"/>
        <end position="237"/>
    </location>
</feature>
<feature type="binding site" evidence="1">
    <location>
        <begin position="35"/>
        <end position="42"/>
    </location>
    <ligand>
        <name>ATP</name>
        <dbReference type="ChEBI" id="CHEBI:30616"/>
    </ligand>
</feature>
<accession>Q88CL2</accession>
<gene>
    <name evidence="1" type="primary">cysA</name>
    <name type="ordered locus">PP_5168</name>
</gene>
<dbReference type="EC" id="7.3.2.3" evidence="1"/>
<dbReference type="EMBL" id="AE015451">
    <property type="protein sequence ID" value="AAN70733.1"/>
    <property type="molecule type" value="Genomic_DNA"/>
</dbReference>
<dbReference type="RefSeq" id="NP_747269.1">
    <property type="nucleotide sequence ID" value="NC_002947.4"/>
</dbReference>
<dbReference type="RefSeq" id="WP_003248965.1">
    <property type="nucleotide sequence ID" value="NZ_CP169744.1"/>
</dbReference>
<dbReference type="SMR" id="Q88CL2"/>
<dbReference type="STRING" id="160488.PP_5168"/>
<dbReference type="PaxDb" id="160488-PP_5168"/>
<dbReference type="KEGG" id="ppu:PP_5168"/>
<dbReference type="PATRIC" id="fig|160488.4.peg.5515"/>
<dbReference type="eggNOG" id="COG1118">
    <property type="taxonomic scope" value="Bacteria"/>
</dbReference>
<dbReference type="HOGENOM" id="CLU_000604_1_1_6"/>
<dbReference type="OrthoDB" id="9802264at2"/>
<dbReference type="PhylomeDB" id="Q88CL2"/>
<dbReference type="BioCyc" id="PPUT160488:G1G01-5513-MONOMER"/>
<dbReference type="Proteomes" id="UP000000556">
    <property type="component" value="Chromosome"/>
</dbReference>
<dbReference type="GO" id="GO:0043190">
    <property type="term" value="C:ATP-binding cassette (ABC) transporter complex"/>
    <property type="evidence" value="ECO:0007669"/>
    <property type="project" value="InterPro"/>
</dbReference>
<dbReference type="GO" id="GO:0015419">
    <property type="term" value="F:ABC-type sulfate transporter activity"/>
    <property type="evidence" value="ECO:0007669"/>
    <property type="project" value="InterPro"/>
</dbReference>
<dbReference type="GO" id="GO:0102025">
    <property type="term" value="F:ABC-type thiosulfate transporter activity"/>
    <property type="evidence" value="ECO:0007669"/>
    <property type="project" value="RHEA"/>
</dbReference>
<dbReference type="GO" id="GO:0005524">
    <property type="term" value="F:ATP binding"/>
    <property type="evidence" value="ECO:0007669"/>
    <property type="project" value="UniProtKB-KW"/>
</dbReference>
<dbReference type="GO" id="GO:0016887">
    <property type="term" value="F:ATP hydrolysis activity"/>
    <property type="evidence" value="ECO:0007669"/>
    <property type="project" value="InterPro"/>
</dbReference>
<dbReference type="CDD" id="cd03296">
    <property type="entry name" value="ABC_CysA_sulfate_importer"/>
    <property type="match status" value="1"/>
</dbReference>
<dbReference type="FunFam" id="3.40.50.300:FF:000227">
    <property type="entry name" value="Sulfate/thiosulfate import ATP-binding protein CysA"/>
    <property type="match status" value="1"/>
</dbReference>
<dbReference type="Gene3D" id="3.40.50.300">
    <property type="entry name" value="P-loop containing nucleotide triphosphate hydrolases"/>
    <property type="match status" value="1"/>
</dbReference>
<dbReference type="InterPro" id="IPR003593">
    <property type="entry name" value="AAA+_ATPase"/>
</dbReference>
<dbReference type="InterPro" id="IPR050093">
    <property type="entry name" value="ABC_SmlMolc_Importer"/>
</dbReference>
<dbReference type="InterPro" id="IPR003439">
    <property type="entry name" value="ABC_transporter-like_ATP-bd"/>
</dbReference>
<dbReference type="InterPro" id="IPR017871">
    <property type="entry name" value="ABC_transporter-like_CS"/>
</dbReference>
<dbReference type="InterPro" id="IPR008995">
    <property type="entry name" value="Mo/tungstate-bd_C_term_dom"/>
</dbReference>
<dbReference type="InterPro" id="IPR027417">
    <property type="entry name" value="P-loop_NTPase"/>
</dbReference>
<dbReference type="InterPro" id="IPR005666">
    <property type="entry name" value="Sulph_transpt1"/>
</dbReference>
<dbReference type="InterPro" id="IPR024765">
    <property type="entry name" value="TOBE-like"/>
</dbReference>
<dbReference type="NCBIfam" id="TIGR00968">
    <property type="entry name" value="3a0106s01"/>
    <property type="match status" value="1"/>
</dbReference>
<dbReference type="PANTHER" id="PTHR42781">
    <property type="entry name" value="SPERMIDINE/PUTRESCINE IMPORT ATP-BINDING PROTEIN POTA"/>
    <property type="match status" value="1"/>
</dbReference>
<dbReference type="PANTHER" id="PTHR42781:SF4">
    <property type="entry name" value="SPERMIDINE_PUTRESCINE IMPORT ATP-BINDING PROTEIN POTA"/>
    <property type="match status" value="1"/>
</dbReference>
<dbReference type="Pfam" id="PF00005">
    <property type="entry name" value="ABC_tran"/>
    <property type="match status" value="1"/>
</dbReference>
<dbReference type="Pfam" id="PF12857">
    <property type="entry name" value="TOBE_3"/>
    <property type="match status" value="1"/>
</dbReference>
<dbReference type="SMART" id="SM00382">
    <property type="entry name" value="AAA"/>
    <property type="match status" value="1"/>
</dbReference>
<dbReference type="SUPFAM" id="SSF50331">
    <property type="entry name" value="MOP-like"/>
    <property type="match status" value="1"/>
</dbReference>
<dbReference type="SUPFAM" id="SSF52540">
    <property type="entry name" value="P-loop containing nucleoside triphosphate hydrolases"/>
    <property type="match status" value="1"/>
</dbReference>
<dbReference type="PROSITE" id="PS00211">
    <property type="entry name" value="ABC_TRANSPORTER_1"/>
    <property type="match status" value="1"/>
</dbReference>
<dbReference type="PROSITE" id="PS50893">
    <property type="entry name" value="ABC_TRANSPORTER_2"/>
    <property type="match status" value="1"/>
</dbReference>
<dbReference type="PROSITE" id="PS51237">
    <property type="entry name" value="CYSA"/>
    <property type="match status" value="1"/>
</dbReference>
<comment type="function">
    <text evidence="1">Part of the ABC transporter complex CysAWTP involved in sulfate/thiosulfate import. Responsible for energy coupling to the transport system.</text>
</comment>
<comment type="catalytic activity">
    <reaction evidence="1">
        <text>sulfate(out) + ATP + H2O = sulfate(in) + ADP + phosphate + H(+)</text>
        <dbReference type="Rhea" id="RHEA:10192"/>
        <dbReference type="ChEBI" id="CHEBI:15377"/>
        <dbReference type="ChEBI" id="CHEBI:15378"/>
        <dbReference type="ChEBI" id="CHEBI:16189"/>
        <dbReference type="ChEBI" id="CHEBI:30616"/>
        <dbReference type="ChEBI" id="CHEBI:43474"/>
        <dbReference type="ChEBI" id="CHEBI:456216"/>
        <dbReference type="EC" id="7.3.2.3"/>
    </reaction>
</comment>
<comment type="catalytic activity">
    <reaction evidence="1">
        <text>thiosulfate(out) + ATP + H2O = thiosulfate(in) + ADP + phosphate + H(+)</text>
        <dbReference type="Rhea" id="RHEA:29871"/>
        <dbReference type="ChEBI" id="CHEBI:15377"/>
        <dbReference type="ChEBI" id="CHEBI:15378"/>
        <dbReference type="ChEBI" id="CHEBI:30616"/>
        <dbReference type="ChEBI" id="CHEBI:33542"/>
        <dbReference type="ChEBI" id="CHEBI:43474"/>
        <dbReference type="ChEBI" id="CHEBI:456216"/>
        <dbReference type="EC" id="7.3.2.3"/>
    </reaction>
</comment>
<comment type="subunit">
    <text evidence="1">The complex is composed of two ATP-binding proteins (CysA), two transmembrane proteins (CysT and CysW) and a solute-binding protein (CysP).</text>
</comment>
<comment type="subcellular location">
    <subcellularLocation>
        <location evidence="1">Cell inner membrane</location>
        <topology evidence="1">Peripheral membrane protein</topology>
    </subcellularLocation>
</comment>
<comment type="similarity">
    <text evidence="1">Belongs to the ABC transporter superfamily. Sulfate/tungstate importer (TC 3.A.1.6) family.</text>
</comment>
<keyword id="KW-0067">ATP-binding</keyword>
<keyword id="KW-0997">Cell inner membrane</keyword>
<keyword id="KW-1003">Cell membrane</keyword>
<keyword id="KW-0472">Membrane</keyword>
<keyword id="KW-0547">Nucleotide-binding</keyword>
<keyword id="KW-1185">Reference proteome</keyword>
<keyword id="KW-0764">Sulfate transport</keyword>
<keyword id="KW-1278">Translocase</keyword>
<keyword id="KW-0813">Transport</keyword>
<name>CYSA_PSEPK</name>
<protein>
    <recommendedName>
        <fullName evidence="1">Sulfate/thiosulfate import ATP-binding protein CysA</fullName>
        <ecNumber evidence="1">7.3.2.3</ecNumber>
    </recommendedName>
    <alternativeName>
        <fullName evidence="1">Sulfate-transporting ATPase</fullName>
    </alternativeName>
</protein>
<sequence>MSIEVRNVSKRFNSFQALNAINLDINSGELVALLGPSGCGKTTLLRIIAGLETPDQGNIVFHGEDVSGHDVRDRNVGFVFQHYALFRHMSVFDNVAFGLRMKPKGERPSESKIAEKVHELLNMVQLDWLSDRYPEQLSGGQRQRIALARALAVEPKVLLLDEPFGALDAKVRKELRRWLARLHEDINLTSVFVTHDQEEAMEVADRIVVMNKGVIEQIGSPGEVYDQPANDFVYHFLGDSNRLALSEGHHVLFRPHEVSLSRHETEGHHAAEVRDIRPLGATTRVTLKVEGQSELIEAEVVKDHDSLTGLARGETLFFRPKVWQKVADI</sequence>
<organism>
    <name type="scientific">Pseudomonas putida (strain ATCC 47054 / DSM 6125 / CFBP 8728 / NCIMB 11950 / KT2440)</name>
    <dbReference type="NCBI Taxonomy" id="160488"/>
    <lineage>
        <taxon>Bacteria</taxon>
        <taxon>Pseudomonadati</taxon>
        <taxon>Pseudomonadota</taxon>
        <taxon>Gammaproteobacteria</taxon>
        <taxon>Pseudomonadales</taxon>
        <taxon>Pseudomonadaceae</taxon>
        <taxon>Pseudomonas</taxon>
    </lineage>
</organism>